<feature type="chain" id="PRO_0000315588" description="Uncharacterized Nudix hydrolase NudL">
    <location>
        <begin position="1"/>
        <end position="195"/>
    </location>
</feature>
<feature type="domain" description="Nudix hydrolase" evidence="1">
    <location>
        <begin position="34"/>
        <end position="165"/>
    </location>
</feature>
<feature type="short sequence motif" description="Nudix box">
    <location>
        <begin position="72"/>
        <end position="94"/>
    </location>
</feature>
<feature type="binding site" evidence="1">
    <location>
        <position position="88"/>
    </location>
    <ligand>
        <name>Mg(2+)</name>
        <dbReference type="ChEBI" id="CHEBI:18420"/>
    </ligand>
</feature>
<feature type="binding site" evidence="1">
    <location>
        <position position="92"/>
    </location>
    <ligand>
        <name>Mg(2+)</name>
        <dbReference type="ChEBI" id="CHEBI:18420"/>
    </ligand>
</feature>
<dbReference type="EC" id="3.6.1.-" evidence="1"/>
<dbReference type="EMBL" id="AM286415">
    <property type="protein sequence ID" value="CAL11849.1"/>
    <property type="molecule type" value="Genomic_DNA"/>
</dbReference>
<dbReference type="RefSeq" id="YP_001006056.1">
    <property type="nucleotide sequence ID" value="NC_008800.1"/>
</dbReference>
<dbReference type="SMR" id="A1JMC0"/>
<dbReference type="KEGG" id="yen:YE1780"/>
<dbReference type="PATRIC" id="fig|393305.7.peg.1931"/>
<dbReference type="eggNOG" id="COG0494">
    <property type="taxonomic scope" value="Bacteria"/>
</dbReference>
<dbReference type="HOGENOM" id="CLU_040940_5_2_6"/>
<dbReference type="OrthoDB" id="9802805at2"/>
<dbReference type="Proteomes" id="UP000000642">
    <property type="component" value="Chromosome"/>
</dbReference>
<dbReference type="GO" id="GO:0010945">
    <property type="term" value="F:coenzyme A diphosphatase activity"/>
    <property type="evidence" value="ECO:0007669"/>
    <property type="project" value="InterPro"/>
</dbReference>
<dbReference type="GO" id="GO:0000287">
    <property type="term" value="F:magnesium ion binding"/>
    <property type="evidence" value="ECO:0007669"/>
    <property type="project" value="UniProtKB-UniRule"/>
</dbReference>
<dbReference type="GO" id="GO:0030145">
    <property type="term" value="F:manganese ion binding"/>
    <property type="evidence" value="ECO:0007669"/>
    <property type="project" value="UniProtKB-UniRule"/>
</dbReference>
<dbReference type="GO" id="GO:0009132">
    <property type="term" value="P:nucleoside diphosphate metabolic process"/>
    <property type="evidence" value="ECO:0007669"/>
    <property type="project" value="InterPro"/>
</dbReference>
<dbReference type="CDD" id="cd03426">
    <property type="entry name" value="NUDIX_CoAse_Nudt7"/>
    <property type="match status" value="1"/>
</dbReference>
<dbReference type="Gene3D" id="3.90.79.10">
    <property type="entry name" value="Nucleoside Triphosphate Pyrophosphohydrolase"/>
    <property type="match status" value="1"/>
</dbReference>
<dbReference type="HAMAP" id="MF_01592">
    <property type="entry name" value="Nudix_NudL"/>
    <property type="match status" value="1"/>
</dbReference>
<dbReference type="InterPro" id="IPR045121">
    <property type="entry name" value="CoAse"/>
</dbReference>
<dbReference type="InterPro" id="IPR015797">
    <property type="entry name" value="NUDIX_hydrolase-like_dom_sf"/>
</dbReference>
<dbReference type="InterPro" id="IPR000086">
    <property type="entry name" value="NUDIX_hydrolase_dom"/>
</dbReference>
<dbReference type="InterPro" id="IPR000059">
    <property type="entry name" value="NUDIX_hydrolase_NudL_CS"/>
</dbReference>
<dbReference type="InterPro" id="IPR023735">
    <property type="entry name" value="Nudix_NudL"/>
</dbReference>
<dbReference type="NCBIfam" id="NF007980">
    <property type="entry name" value="PRK10707.1"/>
    <property type="match status" value="1"/>
</dbReference>
<dbReference type="PANTHER" id="PTHR12992:SF11">
    <property type="entry name" value="MITOCHONDRIAL COENZYME A DIPHOSPHATASE NUDT8"/>
    <property type="match status" value="1"/>
</dbReference>
<dbReference type="PANTHER" id="PTHR12992">
    <property type="entry name" value="NUDIX HYDROLASE"/>
    <property type="match status" value="1"/>
</dbReference>
<dbReference type="Pfam" id="PF00293">
    <property type="entry name" value="NUDIX"/>
    <property type="match status" value="1"/>
</dbReference>
<dbReference type="SUPFAM" id="SSF55811">
    <property type="entry name" value="Nudix"/>
    <property type="match status" value="1"/>
</dbReference>
<dbReference type="PROSITE" id="PS51462">
    <property type="entry name" value="NUDIX"/>
    <property type="match status" value="1"/>
</dbReference>
<dbReference type="PROSITE" id="PS01293">
    <property type="entry name" value="NUDIX_COA"/>
    <property type="match status" value="1"/>
</dbReference>
<comment type="function">
    <text evidence="1">Probably mediates the hydrolysis of some nucleoside diphosphate derivatives.</text>
</comment>
<comment type="cofactor">
    <cofactor evidence="1">
        <name>Mn(2+)</name>
        <dbReference type="ChEBI" id="CHEBI:29035"/>
    </cofactor>
    <cofactor evidence="1">
        <name>Mg(2+)</name>
        <dbReference type="ChEBI" id="CHEBI:18420"/>
    </cofactor>
</comment>
<comment type="similarity">
    <text evidence="1">Belongs to the Nudix hydrolase family. PCD1 subfamily.</text>
</comment>
<keyword id="KW-0378">Hydrolase</keyword>
<keyword id="KW-0460">Magnesium</keyword>
<keyword id="KW-0464">Manganese</keyword>
<keyword id="KW-0479">Metal-binding</keyword>
<proteinExistence type="inferred from homology"/>
<gene>
    <name evidence="1" type="primary">nudL</name>
    <name type="ordered locus">YE1780</name>
</gene>
<organism>
    <name type="scientific">Yersinia enterocolitica serotype O:8 / biotype 1B (strain NCTC 13174 / 8081)</name>
    <dbReference type="NCBI Taxonomy" id="393305"/>
    <lineage>
        <taxon>Bacteria</taxon>
        <taxon>Pseudomonadati</taxon>
        <taxon>Pseudomonadota</taxon>
        <taxon>Gammaproteobacteria</taxon>
        <taxon>Enterobacterales</taxon>
        <taxon>Yersiniaceae</taxon>
        <taxon>Yersinia</taxon>
    </lineage>
</organism>
<sequence length="195" mass="21682">MSDQFVSQSGRTLSEFISRFQLQQPQPGSFSANSHHAAVLIPIVCRPEPTLLLTRRSDHLRKHAGQVAFPGGKADPQDSSLIETALREAEEEVAIPASAVHVLGQLAPLDSSSGFQVTPIVGLVPDNITFHGNEEEVAGLFEIPLYEALRLSRYYWLDIHRGGVNHRVYLSWYESQFIWGLTAAIIRRLAQQVNI</sequence>
<reference key="1">
    <citation type="journal article" date="2006" name="PLoS Genet.">
        <title>The complete genome sequence and comparative genome analysis of the high pathogenicity Yersinia enterocolitica strain 8081.</title>
        <authorList>
            <person name="Thomson N.R."/>
            <person name="Howard S."/>
            <person name="Wren B.W."/>
            <person name="Holden M.T.G."/>
            <person name="Crossman L."/>
            <person name="Challis G.L."/>
            <person name="Churcher C."/>
            <person name="Mungall K."/>
            <person name="Brooks K."/>
            <person name="Chillingworth T."/>
            <person name="Feltwell T."/>
            <person name="Abdellah Z."/>
            <person name="Hauser H."/>
            <person name="Jagels K."/>
            <person name="Maddison M."/>
            <person name="Moule S."/>
            <person name="Sanders M."/>
            <person name="Whitehead S."/>
            <person name="Quail M.A."/>
            <person name="Dougan G."/>
            <person name="Parkhill J."/>
            <person name="Prentice M.B."/>
        </authorList>
    </citation>
    <scope>NUCLEOTIDE SEQUENCE [LARGE SCALE GENOMIC DNA]</scope>
    <source>
        <strain>NCTC 13174 / 8081</strain>
    </source>
</reference>
<name>NUDL_YERE8</name>
<accession>A1JMC0</accession>
<protein>
    <recommendedName>
        <fullName evidence="1">Uncharacterized Nudix hydrolase NudL</fullName>
        <ecNumber evidence="1">3.6.1.-</ecNumber>
    </recommendedName>
</protein>
<evidence type="ECO:0000255" key="1">
    <source>
        <dbReference type="HAMAP-Rule" id="MF_01592"/>
    </source>
</evidence>